<proteinExistence type="inferred from homology"/>
<sequence>MDLSQLTPRRPYLLRAFYEWLLDNQLTPLLVVDVTLPGVQVPMEYARDGQIVLNIAPRAVGNLELANDEVRFNARFGGIPRQVSVPLAAVLAIYARENGAGTMFEPEAAYDEDTSIMNDEEASADNETVMSVIDGDKPDHDDDTHPDDEPPQPPRGGRPALRVVK</sequence>
<gene>
    <name type="primary">sspB</name>
    <name type="ordered locus">SF3268</name>
    <name type="ordered locus">S3483</name>
</gene>
<feature type="chain" id="PRO_0000072221" description="Stringent starvation protein B">
    <location>
        <begin position="1"/>
        <end position="165"/>
    </location>
</feature>
<feature type="region of interest" description="Disordered" evidence="2">
    <location>
        <begin position="119"/>
        <end position="165"/>
    </location>
</feature>
<feature type="compositionally biased region" description="Basic and acidic residues" evidence="2">
    <location>
        <begin position="134"/>
        <end position="143"/>
    </location>
</feature>
<feature type="sequence conflict" description="In Ref. 2; AAP18543." evidence="3" ref="2">
    <original>L</original>
    <variation>H</variation>
    <location>
        <position position="29"/>
    </location>
</feature>
<dbReference type="EMBL" id="AE005674">
    <property type="protein sequence ID" value="AAN44732.1"/>
    <property type="molecule type" value="Genomic_DNA"/>
</dbReference>
<dbReference type="EMBL" id="AE014073">
    <property type="protein sequence ID" value="AAP18543.1"/>
    <property type="molecule type" value="Genomic_DNA"/>
</dbReference>
<dbReference type="RefSeq" id="NP_709025.1">
    <property type="nucleotide sequence ID" value="NC_004337.2"/>
</dbReference>
<dbReference type="RefSeq" id="WP_000366139.1">
    <property type="nucleotide sequence ID" value="NZ_CP123365.1"/>
</dbReference>
<dbReference type="SMR" id="Q83Q08"/>
<dbReference type="STRING" id="198214.SF3268"/>
<dbReference type="PaxDb" id="198214-SF3268"/>
<dbReference type="GeneID" id="1027107"/>
<dbReference type="KEGG" id="sfl:SF3268"/>
<dbReference type="KEGG" id="sfx:S3483"/>
<dbReference type="PATRIC" id="fig|198214.7.peg.3871"/>
<dbReference type="HOGENOM" id="CLU_118425_0_0_6"/>
<dbReference type="Proteomes" id="UP000001006">
    <property type="component" value="Chromosome"/>
</dbReference>
<dbReference type="Proteomes" id="UP000002673">
    <property type="component" value="Chromosome"/>
</dbReference>
<dbReference type="GO" id="GO:0005829">
    <property type="term" value="C:cytosol"/>
    <property type="evidence" value="ECO:0007669"/>
    <property type="project" value="TreeGrafter"/>
</dbReference>
<dbReference type="GO" id="GO:0005840">
    <property type="term" value="C:ribosome"/>
    <property type="evidence" value="ECO:0007669"/>
    <property type="project" value="TreeGrafter"/>
</dbReference>
<dbReference type="GO" id="GO:0045732">
    <property type="term" value="P:positive regulation of protein catabolic process"/>
    <property type="evidence" value="ECO:0007669"/>
    <property type="project" value="TreeGrafter"/>
</dbReference>
<dbReference type="FunFam" id="2.30.30.220:FF:000001">
    <property type="entry name" value="ClpXP protease specificity-enhancing factor"/>
    <property type="match status" value="1"/>
</dbReference>
<dbReference type="Gene3D" id="2.30.30.220">
    <property type="entry name" value="SspB-like"/>
    <property type="match status" value="1"/>
</dbReference>
<dbReference type="InterPro" id="IPR007481">
    <property type="entry name" value="SspB"/>
</dbReference>
<dbReference type="InterPro" id="IPR036760">
    <property type="entry name" value="SspB-like_sf"/>
</dbReference>
<dbReference type="NCBIfam" id="NF008762">
    <property type="entry name" value="PRK11798.1-1"/>
    <property type="match status" value="1"/>
</dbReference>
<dbReference type="NCBIfam" id="NF008763">
    <property type="entry name" value="PRK11798.1-2"/>
    <property type="match status" value="1"/>
</dbReference>
<dbReference type="NCBIfam" id="NF008769">
    <property type="entry name" value="PRK11798.2-5"/>
    <property type="match status" value="1"/>
</dbReference>
<dbReference type="PANTHER" id="PTHR37486">
    <property type="entry name" value="STRINGENT STARVATION PROTEIN B"/>
    <property type="match status" value="1"/>
</dbReference>
<dbReference type="PANTHER" id="PTHR37486:SF1">
    <property type="entry name" value="STRINGENT STARVATION PROTEIN B"/>
    <property type="match status" value="1"/>
</dbReference>
<dbReference type="Pfam" id="PF04386">
    <property type="entry name" value="SspB"/>
    <property type="match status" value="1"/>
</dbReference>
<dbReference type="PIRSF" id="PIRSF005276">
    <property type="entry name" value="SspB"/>
    <property type="match status" value="1"/>
</dbReference>
<dbReference type="SUPFAM" id="SSF101738">
    <property type="entry name" value="SspB-like"/>
    <property type="match status" value="1"/>
</dbReference>
<protein>
    <recommendedName>
        <fullName>Stringent starvation protein B</fullName>
    </recommendedName>
    <alternativeName>
        <fullName>Adapter protein SspB</fullName>
    </alternativeName>
    <alternativeName>
        <fullName>Specificity-enhancing factor SspB</fullName>
    </alternativeName>
</protein>
<keyword id="KW-1185">Reference proteome</keyword>
<evidence type="ECO:0000250" key="1"/>
<evidence type="ECO:0000256" key="2">
    <source>
        <dbReference type="SAM" id="MobiDB-lite"/>
    </source>
</evidence>
<evidence type="ECO:0000305" key="3"/>
<name>SSPB_SHIFL</name>
<accession>Q83Q08</accession>
<reference key="1">
    <citation type="journal article" date="2002" name="Nucleic Acids Res.">
        <title>Genome sequence of Shigella flexneri 2a: insights into pathogenicity through comparison with genomes of Escherichia coli K12 and O157.</title>
        <authorList>
            <person name="Jin Q."/>
            <person name="Yuan Z."/>
            <person name="Xu J."/>
            <person name="Wang Y."/>
            <person name="Shen Y."/>
            <person name="Lu W."/>
            <person name="Wang J."/>
            <person name="Liu H."/>
            <person name="Yang J."/>
            <person name="Yang F."/>
            <person name="Zhang X."/>
            <person name="Zhang J."/>
            <person name="Yang G."/>
            <person name="Wu H."/>
            <person name="Qu D."/>
            <person name="Dong J."/>
            <person name="Sun L."/>
            <person name="Xue Y."/>
            <person name="Zhao A."/>
            <person name="Gao Y."/>
            <person name="Zhu J."/>
            <person name="Kan B."/>
            <person name="Ding K."/>
            <person name="Chen S."/>
            <person name="Cheng H."/>
            <person name="Yao Z."/>
            <person name="He B."/>
            <person name="Chen R."/>
            <person name="Ma D."/>
            <person name="Qiang B."/>
            <person name="Wen Y."/>
            <person name="Hou Y."/>
            <person name="Yu J."/>
        </authorList>
    </citation>
    <scope>NUCLEOTIDE SEQUENCE [LARGE SCALE GENOMIC DNA]</scope>
    <source>
        <strain>301 / Serotype 2a</strain>
    </source>
</reference>
<reference key="2">
    <citation type="journal article" date="2003" name="Infect. Immun.">
        <title>Complete genome sequence and comparative genomics of Shigella flexneri serotype 2a strain 2457T.</title>
        <authorList>
            <person name="Wei J."/>
            <person name="Goldberg M.B."/>
            <person name="Burland V."/>
            <person name="Venkatesan M.M."/>
            <person name="Deng W."/>
            <person name="Fournier G."/>
            <person name="Mayhew G.F."/>
            <person name="Plunkett G. III"/>
            <person name="Rose D.J."/>
            <person name="Darling A."/>
            <person name="Mau B."/>
            <person name="Perna N.T."/>
            <person name="Payne S.M."/>
            <person name="Runyen-Janecky L.J."/>
            <person name="Zhou S."/>
            <person name="Schwartz D.C."/>
            <person name="Blattner F.R."/>
        </authorList>
    </citation>
    <scope>NUCLEOTIDE SEQUENCE [LARGE SCALE GENOMIC DNA]</scope>
    <source>
        <strain>ATCC 700930 / 2457T / Serotype 2a</strain>
    </source>
</reference>
<organism>
    <name type="scientific">Shigella flexneri</name>
    <dbReference type="NCBI Taxonomy" id="623"/>
    <lineage>
        <taxon>Bacteria</taxon>
        <taxon>Pseudomonadati</taxon>
        <taxon>Pseudomonadota</taxon>
        <taxon>Gammaproteobacteria</taxon>
        <taxon>Enterobacterales</taxon>
        <taxon>Enterobacteriaceae</taxon>
        <taxon>Shigella</taxon>
    </lineage>
</organism>
<comment type="function">
    <text evidence="1">Enhances recognition of ssrA-tagged proteins by the ClpX-ClpP protease; the ssrA degradation tag (AANDENYALAA) is added trans-translationally to proteins that are stalled on the ribosome, freeing the ribosome and targeting stalled peptides for degradation. SspB activates the ATPase activity of ClpX. Seems to act in concert with SspA in the regulation of several proteins during exponential and stationary-phase growth (By similarity).</text>
</comment>
<comment type="function">
    <text evidence="1">Also stimulates degradation of the N-terminus of RseA (residues 1-108, alone or in complex with sigma-E) by ClpX-ClpP in a non-ssrA-mediated fashion.</text>
</comment>
<comment type="subunit">
    <text evidence="1">Homodimer.</text>
</comment>
<comment type="similarity">
    <text evidence="3">Belongs to the SspB family.</text>
</comment>